<reference key="1">
    <citation type="journal article" date="2009" name="PLoS ONE">
        <title>Complete genome sequence of Francisella tularensis subspecies holarctica FTNF002-00.</title>
        <authorList>
            <person name="Barabote R.D."/>
            <person name="Xie G."/>
            <person name="Brettin T.S."/>
            <person name="Hinrichs S.H."/>
            <person name="Fey P.D."/>
            <person name="Jay J.J."/>
            <person name="Engle J.L."/>
            <person name="Godbole S.D."/>
            <person name="Noronha J.M."/>
            <person name="Scheuermann R.H."/>
            <person name="Zhou L.W."/>
            <person name="Lion C."/>
            <person name="Dempsey M.P."/>
        </authorList>
    </citation>
    <scope>NUCLEOTIDE SEQUENCE [LARGE SCALE GENOMIC DNA]</scope>
    <source>
        <strain>FTNF002-00 / FTA</strain>
    </source>
</reference>
<organism>
    <name type="scientific">Francisella tularensis subsp. holarctica (strain FTNF002-00 / FTA)</name>
    <dbReference type="NCBI Taxonomy" id="458234"/>
    <lineage>
        <taxon>Bacteria</taxon>
        <taxon>Pseudomonadati</taxon>
        <taxon>Pseudomonadota</taxon>
        <taxon>Gammaproteobacteria</taxon>
        <taxon>Thiotrichales</taxon>
        <taxon>Francisellaceae</taxon>
        <taxon>Francisella</taxon>
    </lineage>
</organism>
<gene>
    <name evidence="1" type="primary">cysS</name>
    <name type="ordered locus">FTA_1781</name>
</gene>
<accession>A7NE53</accession>
<dbReference type="EC" id="6.1.1.16" evidence="1"/>
<dbReference type="EMBL" id="CP000803">
    <property type="protein sequence ID" value="ABU62256.1"/>
    <property type="molecule type" value="Genomic_DNA"/>
</dbReference>
<dbReference type="RefSeq" id="WP_003017134.1">
    <property type="nucleotide sequence ID" value="NC_009749.1"/>
</dbReference>
<dbReference type="SMR" id="A7NE53"/>
<dbReference type="GeneID" id="75264190"/>
<dbReference type="KEGG" id="fta:FTA_1781"/>
<dbReference type="HOGENOM" id="CLU_013528_0_1_6"/>
<dbReference type="GO" id="GO:0005829">
    <property type="term" value="C:cytosol"/>
    <property type="evidence" value="ECO:0007669"/>
    <property type="project" value="TreeGrafter"/>
</dbReference>
<dbReference type="GO" id="GO:0005524">
    <property type="term" value="F:ATP binding"/>
    <property type="evidence" value="ECO:0007669"/>
    <property type="project" value="UniProtKB-UniRule"/>
</dbReference>
<dbReference type="GO" id="GO:0004817">
    <property type="term" value="F:cysteine-tRNA ligase activity"/>
    <property type="evidence" value="ECO:0007669"/>
    <property type="project" value="UniProtKB-UniRule"/>
</dbReference>
<dbReference type="GO" id="GO:0008270">
    <property type="term" value="F:zinc ion binding"/>
    <property type="evidence" value="ECO:0007669"/>
    <property type="project" value="UniProtKB-UniRule"/>
</dbReference>
<dbReference type="GO" id="GO:0006423">
    <property type="term" value="P:cysteinyl-tRNA aminoacylation"/>
    <property type="evidence" value="ECO:0007669"/>
    <property type="project" value="UniProtKB-UniRule"/>
</dbReference>
<dbReference type="CDD" id="cd07963">
    <property type="entry name" value="Anticodon_Ia_Cys"/>
    <property type="match status" value="1"/>
</dbReference>
<dbReference type="CDD" id="cd00672">
    <property type="entry name" value="CysRS_core"/>
    <property type="match status" value="1"/>
</dbReference>
<dbReference type="FunFam" id="3.40.50.620:FF:000009">
    <property type="entry name" value="Cysteine--tRNA ligase"/>
    <property type="match status" value="1"/>
</dbReference>
<dbReference type="Gene3D" id="1.20.120.1910">
    <property type="entry name" value="Cysteine-tRNA ligase, C-terminal anti-codon recognition domain"/>
    <property type="match status" value="1"/>
</dbReference>
<dbReference type="Gene3D" id="3.40.50.620">
    <property type="entry name" value="HUPs"/>
    <property type="match status" value="1"/>
</dbReference>
<dbReference type="HAMAP" id="MF_00041">
    <property type="entry name" value="Cys_tRNA_synth"/>
    <property type="match status" value="1"/>
</dbReference>
<dbReference type="InterPro" id="IPR015803">
    <property type="entry name" value="Cys-tRNA-ligase"/>
</dbReference>
<dbReference type="InterPro" id="IPR015273">
    <property type="entry name" value="Cys-tRNA-synt_Ia_DALR"/>
</dbReference>
<dbReference type="InterPro" id="IPR024909">
    <property type="entry name" value="Cys-tRNA/MSH_ligase"/>
</dbReference>
<dbReference type="InterPro" id="IPR056411">
    <property type="entry name" value="CysS_C"/>
</dbReference>
<dbReference type="InterPro" id="IPR014729">
    <property type="entry name" value="Rossmann-like_a/b/a_fold"/>
</dbReference>
<dbReference type="InterPro" id="IPR032678">
    <property type="entry name" value="tRNA-synt_1_cat_dom"/>
</dbReference>
<dbReference type="InterPro" id="IPR009080">
    <property type="entry name" value="tRNAsynth_Ia_anticodon-bd"/>
</dbReference>
<dbReference type="NCBIfam" id="TIGR00435">
    <property type="entry name" value="cysS"/>
    <property type="match status" value="1"/>
</dbReference>
<dbReference type="PANTHER" id="PTHR10890:SF3">
    <property type="entry name" value="CYSTEINE--TRNA LIGASE, CYTOPLASMIC"/>
    <property type="match status" value="1"/>
</dbReference>
<dbReference type="PANTHER" id="PTHR10890">
    <property type="entry name" value="CYSTEINYL-TRNA SYNTHETASE"/>
    <property type="match status" value="1"/>
</dbReference>
<dbReference type="Pfam" id="PF23493">
    <property type="entry name" value="CysS_C"/>
    <property type="match status" value="1"/>
</dbReference>
<dbReference type="Pfam" id="PF09190">
    <property type="entry name" value="DALR_2"/>
    <property type="match status" value="1"/>
</dbReference>
<dbReference type="Pfam" id="PF01406">
    <property type="entry name" value="tRNA-synt_1e"/>
    <property type="match status" value="1"/>
</dbReference>
<dbReference type="PRINTS" id="PR00983">
    <property type="entry name" value="TRNASYNTHCYS"/>
</dbReference>
<dbReference type="SMART" id="SM00840">
    <property type="entry name" value="DALR_2"/>
    <property type="match status" value="1"/>
</dbReference>
<dbReference type="SUPFAM" id="SSF47323">
    <property type="entry name" value="Anticodon-binding domain of a subclass of class I aminoacyl-tRNA synthetases"/>
    <property type="match status" value="1"/>
</dbReference>
<dbReference type="SUPFAM" id="SSF52374">
    <property type="entry name" value="Nucleotidylyl transferase"/>
    <property type="match status" value="1"/>
</dbReference>
<keyword id="KW-0030">Aminoacyl-tRNA synthetase</keyword>
<keyword id="KW-0067">ATP-binding</keyword>
<keyword id="KW-0963">Cytoplasm</keyword>
<keyword id="KW-0436">Ligase</keyword>
<keyword id="KW-0479">Metal-binding</keyword>
<keyword id="KW-0547">Nucleotide-binding</keyword>
<keyword id="KW-0648">Protein biosynthesis</keyword>
<keyword id="KW-0862">Zinc</keyword>
<name>SYC_FRATF</name>
<evidence type="ECO:0000255" key="1">
    <source>
        <dbReference type="HAMAP-Rule" id="MF_00041"/>
    </source>
</evidence>
<protein>
    <recommendedName>
        <fullName evidence="1">Cysteine--tRNA ligase</fullName>
        <ecNumber evidence="1">6.1.1.16</ecNumber>
    </recommendedName>
    <alternativeName>
        <fullName evidence="1">Cysteinyl-tRNA synthetase</fullName>
        <shortName evidence="1">CysRS</shortName>
    </alternativeName>
</protein>
<proteinExistence type="inferred from homology"/>
<comment type="catalytic activity">
    <reaction evidence="1">
        <text>tRNA(Cys) + L-cysteine + ATP = L-cysteinyl-tRNA(Cys) + AMP + diphosphate</text>
        <dbReference type="Rhea" id="RHEA:17773"/>
        <dbReference type="Rhea" id="RHEA-COMP:9661"/>
        <dbReference type="Rhea" id="RHEA-COMP:9679"/>
        <dbReference type="ChEBI" id="CHEBI:30616"/>
        <dbReference type="ChEBI" id="CHEBI:33019"/>
        <dbReference type="ChEBI" id="CHEBI:35235"/>
        <dbReference type="ChEBI" id="CHEBI:78442"/>
        <dbReference type="ChEBI" id="CHEBI:78517"/>
        <dbReference type="ChEBI" id="CHEBI:456215"/>
        <dbReference type="EC" id="6.1.1.16"/>
    </reaction>
</comment>
<comment type="cofactor">
    <cofactor evidence="1">
        <name>Zn(2+)</name>
        <dbReference type="ChEBI" id="CHEBI:29105"/>
    </cofactor>
    <text evidence="1">Binds 1 zinc ion per subunit.</text>
</comment>
<comment type="subunit">
    <text evidence="1">Monomer.</text>
</comment>
<comment type="subcellular location">
    <subcellularLocation>
        <location evidence="1">Cytoplasm</location>
    </subcellularLocation>
</comment>
<comment type="similarity">
    <text evidence="1">Belongs to the class-I aminoacyl-tRNA synthetase family.</text>
</comment>
<sequence length="464" mass="53076">MDFCFMIFYNSLSGQKEQFKPIEANKIKMYACGVTVYDDCHIGHARTYIAFDVINRYFKYRGYDVTLVRNITDIDDKIIKRANENGESTTELVERNIKAMHDVFARLNILKPSKEPRATETIPEMVAMIETLIKKGYAYQGANGDVFYRVTKFADYGKLSKQNLEALQQGSRVDVVEEKENPMDFVLWKMAKEGEPAWDSPWGAGRPGWHIECSAMSKKLLGDTFDIHAGGSDLRFPHHENEIAQSEACNECTFANYWLHSGMVKVNAEKMSKSLNNFFTIVEVLEEYHPEVVRYFLASTVYRSEINYSKENLENAKASVERLFNALRDIEPIEVNLPDDASEYEEKFIKAMDNDFNTPEALAVLFSLAKEINTLKTTNKYKASGYAYLLRKLCDVLGILFTDIEEYFKQGDGADASEIEKLIAERTQAKKDKNYARADEIRNQLQQQGIILEDSATGTTWKKG</sequence>
<feature type="chain" id="PRO_0000332826" description="Cysteine--tRNA ligase">
    <location>
        <begin position="1"/>
        <end position="464"/>
    </location>
</feature>
<feature type="short sequence motif" description="'HIGH' region">
    <location>
        <begin position="34"/>
        <end position="44"/>
    </location>
</feature>
<feature type="short sequence motif" description="'KMSKS' region">
    <location>
        <begin position="270"/>
        <end position="274"/>
    </location>
</feature>
<feature type="binding site" evidence="1">
    <location>
        <position position="32"/>
    </location>
    <ligand>
        <name>Zn(2+)</name>
        <dbReference type="ChEBI" id="CHEBI:29105"/>
    </ligand>
</feature>
<feature type="binding site" evidence="1">
    <location>
        <position position="213"/>
    </location>
    <ligand>
        <name>Zn(2+)</name>
        <dbReference type="ChEBI" id="CHEBI:29105"/>
    </ligand>
</feature>
<feature type="binding site" evidence="1">
    <location>
        <position position="238"/>
    </location>
    <ligand>
        <name>Zn(2+)</name>
        <dbReference type="ChEBI" id="CHEBI:29105"/>
    </ligand>
</feature>
<feature type="binding site" evidence="1">
    <location>
        <position position="242"/>
    </location>
    <ligand>
        <name>Zn(2+)</name>
        <dbReference type="ChEBI" id="CHEBI:29105"/>
    </ligand>
</feature>
<feature type="binding site" evidence="1">
    <location>
        <position position="273"/>
    </location>
    <ligand>
        <name>ATP</name>
        <dbReference type="ChEBI" id="CHEBI:30616"/>
    </ligand>
</feature>